<feature type="chain" id="PRO_0000069732" description="Melanocortin receptor 5">
    <location>
        <begin position="1"/>
        <end position="325"/>
    </location>
</feature>
<feature type="topological domain" description="Extracellular" evidence="1">
    <location>
        <begin position="1"/>
        <end position="37"/>
    </location>
</feature>
<feature type="transmembrane region" description="Helical; Name=1" evidence="1">
    <location>
        <begin position="38"/>
        <end position="61"/>
    </location>
</feature>
<feature type="topological domain" description="Cytoplasmic" evidence="1">
    <location>
        <begin position="62"/>
        <end position="73"/>
    </location>
</feature>
<feature type="transmembrane region" description="Helical; Name=2" evidence="1">
    <location>
        <begin position="74"/>
        <end position="97"/>
    </location>
</feature>
<feature type="topological domain" description="Extracellular" evidence="1">
    <location>
        <begin position="98"/>
        <end position="114"/>
    </location>
</feature>
<feature type="transmembrane region" description="Helical; Name=3" evidence="1">
    <location>
        <begin position="115"/>
        <end position="138"/>
    </location>
</feature>
<feature type="topological domain" description="Cytoplasmic" evidence="1">
    <location>
        <begin position="139"/>
        <end position="155"/>
    </location>
</feature>
<feature type="transmembrane region" description="Helical; Name=4" evidence="1">
    <location>
        <begin position="156"/>
        <end position="179"/>
    </location>
</feature>
<feature type="topological domain" description="Extracellular" evidence="1">
    <location>
        <begin position="180"/>
        <end position="186"/>
    </location>
</feature>
<feature type="transmembrane region" description="Helical; Name=5" evidence="1">
    <location>
        <begin position="187"/>
        <end position="211"/>
    </location>
</feature>
<feature type="topological domain" description="Cytoplasmic" evidence="1">
    <location>
        <begin position="212"/>
        <end position="239"/>
    </location>
</feature>
<feature type="transmembrane region" description="Helical; Name=6" evidence="1">
    <location>
        <begin position="240"/>
        <end position="265"/>
    </location>
</feature>
<feature type="topological domain" description="Extracellular" evidence="1">
    <location>
        <begin position="266"/>
        <end position="273"/>
    </location>
</feature>
<feature type="transmembrane region" description="Helical; Name=7" evidence="1">
    <location>
        <begin position="274"/>
        <end position="297"/>
    </location>
</feature>
<feature type="topological domain" description="Cytoplasmic" evidence="1">
    <location>
        <begin position="298"/>
        <end position="325"/>
    </location>
</feature>
<feature type="lipid moiety-binding region" description="S-palmitoyl cysteine" evidence="1">
    <location>
        <position position="311"/>
    </location>
</feature>
<feature type="lipid moiety-binding region" description="S-palmitoyl cysteine" evidence="1">
    <location>
        <position position="312"/>
    </location>
</feature>
<feature type="glycosylation site" description="N-linked (GlcNAc...) asparagine" evidence="1">
    <location>
        <position position="2"/>
    </location>
</feature>
<feature type="glycosylation site" description="N-linked (GlcNAc...) asparagine" evidence="1">
    <location>
        <position position="15"/>
    </location>
</feature>
<feature type="glycosylation site" description="N-linked (GlcNAc...) asparagine" evidence="1">
    <location>
        <position position="28"/>
    </location>
</feature>
<dbReference type="EMBL" id="L27081">
    <property type="protein sequence ID" value="AAA41577.1"/>
    <property type="molecule type" value="mRNA"/>
</dbReference>
<dbReference type="PIR" id="JC2193">
    <property type="entry name" value="JC2193"/>
</dbReference>
<dbReference type="RefSeq" id="NP_037314.1">
    <property type="nucleotide sequence ID" value="NM_013182.3"/>
</dbReference>
<dbReference type="RefSeq" id="XP_017456350.1">
    <property type="nucleotide sequence ID" value="XM_017600861.1"/>
</dbReference>
<dbReference type="SMR" id="P35345"/>
<dbReference type="FunCoup" id="P35345">
    <property type="interactions" value="75"/>
</dbReference>
<dbReference type="STRING" id="10116.ENSRNOP00000022364"/>
<dbReference type="BindingDB" id="P35345"/>
<dbReference type="ChEMBL" id="CHEMBL2701"/>
<dbReference type="GlyCosmos" id="P35345">
    <property type="glycosylation" value="3 sites, No reported glycans"/>
</dbReference>
<dbReference type="GlyGen" id="P35345">
    <property type="glycosylation" value="3 sites"/>
</dbReference>
<dbReference type="PhosphoSitePlus" id="P35345"/>
<dbReference type="PaxDb" id="10116-ENSRNOP00000022364"/>
<dbReference type="Ensembl" id="ENSRNOT00000022364.5">
    <property type="protein sequence ID" value="ENSRNOP00000022364.3"/>
    <property type="gene ID" value="ENSRNOG00000016685.5"/>
</dbReference>
<dbReference type="GeneID" id="25726"/>
<dbReference type="KEGG" id="rno:25726"/>
<dbReference type="UCSC" id="RGD:3058">
    <property type="organism name" value="rat"/>
</dbReference>
<dbReference type="AGR" id="RGD:3058"/>
<dbReference type="CTD" id="4161"/>
<dbReference type="RGD" id="3058">
    <property type="gene designation" value="Mc5r"/>
</dbReference>
<dbReference type="eggNOG" id="KOG3656">
    <property type="taxonomic scope" value="Eukaryota"/>
</dbReference>
<dbReference type="GeneTree" id="ENSGT01120000271819"/>
<dbReference type="HOGENOM" id="CLU_009579_13_0_1"/>
<dbReference type="InParanoid" id="P35345"/>
<dbReference type="OMA" id="WIFCTGC"/>
<dbReference type="OrthoDB" id="5970330at2759"/>
<dbReference type="PhylomeDB" id="P35345"/>
<dbReference type="Reactome" id="R-RNO-375276">
    <property type="pathway name" value="Peptide ligand-binding receptors"/>
</dbReference>
<dbReference type="PRO" id="PR:P35345"/>
<dbReference type="Proteomes" id="UP000002494">
    <property type="component" value="Chromosome 18"/>
</dbReference>
<dbReference type="Bgee" id="ENSRNOG00000016685">
    <property type="expression patterns" value="Expressed in esophagus and 3 other cell types or tissues"/>
</dbReference>
<dbReference type="GO" id="GO:0005737">
    <property type="term" value="C:cytoplasm"/>
    <property type="evidence" value="ECO:0000318"/>
    <property type="project" value="GO_Central"/>
</dbReference>
<dbReference type="GO" id="GO:0005886">
    <property type="term" value="C:plasma membrane"/>
    <property type="evidence" value="ECO:0000318"/>
    <property type="project" value="GO_Central"/>
</dbReference>
<dbReference type="GO" id="GO:0042562">
    <property type="term" value="F:hormone binding"/>
    <property type="evidence" value="ECO:0000314"/>
    <property type="project" value="RGD"/>
</dbReference>
<dbReference type="GO" id="GO:0004977">
    <property type="term" value="F:melanocortin receptor activity"/>
    <property type="evidence" value="ECO:0000314"/>
    <property type="project" value="RGD"/>
</dbReference>
<dbReference type="GO" id="GO:0007189">
    <property type="term" value="P:adenylate cyclase-activating G protein-coupled receptor signaling pathway"/>
    <property type="evidence" value="ECO:0000266"/>
    <property type="project" value="RGD"/>
</dbReference>
<dbReference type="GO" id="GO:0019222">
    <property type="term" value="P:regulation of metabolic process"/>
    <property type="evidence" value="ECO:0000318"/>
    <property type="project" value="GO_Central"/>
</dbReference>
<dbReference type="FunFam" id="1.20.1070.10:FF:000077">
    <property type="entry name" value="Melanocortin receptor 4"/>
    <property type="match status" value="1"/>
</dbReference>
<dbReference type="Gene3D" id="1.20.1070.10">
    <property type="entry name" value="Rhodopsin 7-helix transmembrane proteins"/>
    <property type="match status" value="1"/>
</dbReference>
<dbReference type="InterPro" id="IPR000276">
    <property type="entry name" value="GPCR_Rhodpsn"/>
</dbReference>
<dbReference type="InterPro" id="IPR017452">
    <property type="entry name" value="GPCR_Rhodpsn_7TM"/>
</dbReference>
<dbReference type="InterPro" id="IPR001908">
    <property type="entry name" value="MC3-5R"/>
</dbReference>
<dbReference type="InterPro" id="IPR000621">
    <property type="entry name" value="Melancort_rcpt_5"/>
</dbReference>
<dbReference type="InterPro" id="IPR001671">
    <property type="entry name" value="Melcrt_ACTH_rcpt"/>
</dbReference>
<dbReference type="PANTHER" id="PTHR22750">
    <property type="entry name" value="G-PROTEIN COUPLED RECEPTOR"/>
    <property type="match status" value="1"/>
</dbReference>
<dbReference type="Pfam" id="PF00001">
    <property type="entry name" value="7tm_1"/>
    <property type="match status" value="1"/>
</dbReference>
<dbReference type="PRINTS" id="PR00237">
    <property type="entry name" value="GPCRRHODOPSN"/>
</dbReference>
<dbReference type="PRINTS" id="PR00534">
    <property type="entry name" value="MCRFAMILY"/>
</dbReference>
<dbReference type="PRINTS" id="PR00535">
    <property type="entry name" value="MELNOCORTINR"/>
</dbReference>
<dbReference type="PRINTS" id="PR01063">
    <property type="entry name" value="MELNOCORTN5R"/>
</dbReference>
<dbReference type="SMART" id="SM01381">
    <property type="entry name" value="7TM_GPCR_Srsx"/>
    <property type="match status" value="1"/>
</dbReference>
<dbReference type="SUPFAM" id="SSF81321">
    <property type="entry name" value="Family A G protein-coupled receptor-like"/>
    <property type="match status" value="1"/>
</dbReference>
<dbReference type="PROSITE" id="PS00237">
    <property type="entry name" value="G_PROTEIN_RECEP_F1_1"/>
    <property type="match status" value="1"/>
</dbReference>
<dbReference type="PROSITE" id="PS50262">
    <property type="entry name" value="G_PROTEIN_RECEP_F1_2"/>
    <property type="match status" value="1"/>
</dbReference>
<name>MC5R_RAT</name>
<gene>
    <name type="primary">Mc5r</name>
</gene>
<reference key="1">
    <citation type="journal article" date="1994" name="Biochem. Biophys. Res. Commun.">
        <title>Molecular cloning and characterization of the rat fifth melanocortin receptor.</title>
        <authorList>
            <person name="Griffon N."/>
            <person name="Mignon V."/>
            <person name="Facchinetti P."/>
            <person name="Diaz J."/>
            <person name="Schwartz J.-C."/>
            <person name="Sokoloff P."/>
        </authorList>
    </citation>
    <scope>NUCLEOTIDE SEQUENCE [MRNA]</scope>
    <source>
        <tissue>Corpus striatum</tissue>
    </source>
</reference>
<protein>
    <recommendedName>
        <fullName>Melanocortin receptor 5</fullName>
        <shortName>MC5-R</shortName>
    </recommendedName>
</protein>
<comment type="function">
    <text>Receptor for MSH (alpha, beta and gamma) and ACTH. The activity of this receptor is mediated by G proteins which activate adenylate cyclase. This receptor is a possible mediator of the immunomodulation properties of melanocortins.</text>
</comment>
<comment type="subcellular location">
    <subcellularLocation>
        <location>Cell membrane</location>
        <topology>Multi-pass membrane protein</topology>
    </subcellularLocation>
</comment>
<comment type="tissue specificity">
    <text>Very low expression levels is detected in brain, while high levels are found in adrenals, stomach, lung and spleen.</text>
</comment>
<comment type="similarity">
    <text evidence="2">Belongs to the G-protein coupled receptor 1 family.</text>
</comment>
<organism>
    <name type="scientific">Rattus norvegicus</name>
    <name type="common">Rat</name>
    <dbReference type="NCBI Taxonomy" id="10116"/>
    <lineage>
        <taxon>Eukaryota</taxon>
        <taxon>Metazoa</taxon>
        <taxon>Chordata</taxon>
        <taxon>Craniata</taxon>
        <taxon>Vertebrata</taxon>
        <taxon>Euteleostomi</taxon>
        <taxon>Mammalia</taxon>
        <taxon>Eutheria</taxon>
        <taxon>Euarchontoglires</taxon>
        <taxon>Glires</taxon>
        <taxon>Rodentia</taxon>
        <taxon>Myomorpha</taxon>
        <taxon>Muroidea</taxon>
        <taxon>Muridae</taxon>
        <taxon>Murinae</taxon>
        <taxon>Rattus</taxon>
    </lineage>
</organism>
<sequence>MNSSSHLTLLDLTLNASEDNILGQNVNNKSSACEDMGIAVEVFLTLGLVSLLENILVIGAIVKNKNLHSPMYFFVGSLAVADMLVSMSNAWETITIYLINNKHVVIADTFVRHIDNVFDSMICISVVASMCSLLAIAVDRYITIFYALRYHHIMTARRSGVIIACIWTFCISCGIVFIIYYESKYVIVCLISMFFTMLFFMVSLYIHMFLLARNHVKRIAASPRYNSVRQRASMKGAITLTMLLGIFIVCWSPFFLHLILMISCPQNVYCACFMSYFNMYLILIMCNSVIDPLIYALRSQEMRRTFKEIICCHGFRRTCTLLGRY</sequence>
<accession>P35345</accession>
<evidence type="ECO:0000255" key="1"/>
<evidence type="ECO:0000255" key="2">
    <source>
        <dbReference type="PROSITE-ProRule" id="PRU00521"/>
    </source>
</evidence>
<proteinExistence type="evidence at transcript level"/>
<keyword id="KW-1003">Cell membrane</keyword>
<keyword id="KW-0297">G-protein coupled receptor</keyword>
<keyword id="KW-0325">Glycoprotein</keyword>
<keyword id="KW-0449">Lipoprotein</keyword>
<keyword id="KW-0472">Membrane</keyword>
<keyword id="KW-0564">Palmitate</keyword>
<keyword id="KW-0675">Receptor</keyword>
<keyword id="KW-1185">Reference proteome</keyword>
<keyword id="KW-0807">Transducer</keyword>
<keyword id="KW-0812">Transmembrane</keyword>
<keyword id="KW-1133">Transmembrane helix</keyword>